<feature type="chain" id="PRO_0000134760" description="6,7-dimethyl-8-ribityllumazine synthase">
    <location>
        <begin position="1"/>
        <end position="153"/>
    </location>
</feature>
<feature type="active site" description="Proton donor" evidence="1">
    <location>
        <position position="88"/>
    </location>
</feature>
<feature type="binding site" evidence="1">
    <location>
        <position position="22"/>
    </location>
    <ligand>
        <name>5-amino-6-(D-ribitylamino)uracil</name>
        <dbReference type="ChEBI" id="CHEBI:15934"/>
    </ligand>
</feature>
<feature type="binding site" evidence="1">
    <location>
        <begin position="56"/>
        <end position="58"/>
    </location>
    <ligand>
        <name>5-amino-6-(D-ribitylamino)uracil</name>
        <dbReference type="ChEBI" id="CHEBI:15934"/>
    </ligand>
</feature>
<feature type="binding site" evidence="1">
    <location>
        <begin position="80"/>
        <end position="82"/>
    </location>
    <ligand>
        <name>5-amino-6-(D-ribitylamino)uracil</name>
        <dbReference type="ChEBI" id="CHEBI:15934"/>
    </ligand>
</feature>
<feature type="binding site" evidence="1">
    <location>
        <begin position="85"/>
        <end position="86"/>
    </location>
    <ligand>
        <name>(2S)-2-hydroxy-3-oxobutyl phosphate</name>
        <dbReference type="ChEBI" id="CHEBI:58830"/>
    </ligand>
</feature>
<feature type="binding site" evidence="1">
    <location>
        <position position="113"/>
    </location>
    <ligand>
        <name>5-amino-6-(D-ribitylamino)uracil</name>
        <dbReference type="ChEBI" id="CHEBI:15934"/>
    </ligand>
</feature>
<feature type="binding site" evidence="1">
    <location>
        <position position="127"/>
    </location>
    <ligand>
        <name>(2S)-2-hydroxy-3-oxobutyl phosphate</name>
        <dbReference type="ChEBI" id="CHEBI:58830"/>
    </ligand>
</feature>
<dbReference type="EC" id="2.5.1.78" evidence="1"/>
<dbReference type="EMBL" id="AE017143">
    <property type="protein sequence ID" value="AAP96019.1"/>
    <property type="molecule type" value="Genomic_DNA"/>
</dbReference>
<dbReference type="RefSeq" id="WP_010945068.1">
    <property type="nucleotide sequence ID" value="NC_002940.2"/>
</dbReference>
<dbReference type="SMR" id="Q7VM44"/>
<dbReference type="STRING" id="233412.HD_1165"/>
<dbReference type="KEGG" id="hdu:HD_1165"/>
<dbReference type="eggNOG" id="COG0054">
    <property type="taxonomic scope" value="Bacteria"/>
</dbReference>
<dbReference type="HOGENOM" id="CLU_089358_1_1_6"/>
<dbReference type="OrthoDB" id="9809709at2"/>
<dbReference type="UniPathway" id="UPA00275">
    <property type="reaction ID" value="UER00404"/>
</dbReference>
<dbReference type="Proteomes" id="UP000001022">
    <property type="component" value="Chromosome"/>
</dbReference>
<dbReference type="GO" id="GO:0005829">
    <property type="term" value="C:cytosol"/>
    <property type="evidence" value="ECO:0007669"/>
    <property type="project" value="TreeGrafter"/>
</dbReference>
<dbReference type="GO" id="GO:0009349">
    <property type="term" value="C:riboflavin synthase complex"/>
    <property type="evidence" value="ECO:0007669"/>
    <property type="project" value="InterPro"/>
</dbReference>
<dbReference type="GO" id="GO:0000906">
    <property type="term" value="F:6,7-dimethyl-8-ribityllumazine synthase activity"/>
    <property type="evidence" value="ECO:0007669"/>
    <property type="project" value="UniProtKB-UniRule"/>
</dbReference>
<dbReference type="GO" id="GO:0009231">
    <property type="term" value="P:riboflavin biosynthetic process"/>
    <property type="evidence" value="ECO:0007669"/>
    <property type="project" value="UniProtKB-UniRule"/>
</dbReference>
<dbReference type="CDD" id="cd09209">
    <property type="entry name" value="Lumazine_synthase-I"/>
    <property type="match status" value="1"/>
</dbReference>
<dbReference type="FunFam" id="3.40.50.960:FF:000001">
    <property type="entry name" value="6,7-dimethyl-8-ribityllumazine synthase"/>
    <property type="match status" value="1"/>
</dbReference>
<dbReference type="Gene3D" id="3.40.50.960">
    <property type="entry name" value="Lumazine/riboflavin synthase"/>
    <property type="match status" value="1"/>
</dbReference>
<dbReference type="HAMAP" id="MF_00178">
    <property type="entry name" value="Lumazine_synth"/>
    <property type="match status" value="1"/>
</dbReference>
<dbReference type="InterPro" id="IPR034964">
    <property type="entry name" value="LS"/>
</dbReference>
<dbReference type="InterPro" id="IPR002180">
    <property type="entry name" value="LS/RS"/>
</dbReference>
<dbReference type="InterPro" id="IPR036467">
    <property type="entry name" value="LS/RS_sf"/>
</dbReference>
<dbReference type="NCBIfam" id="TIGR00114">
    <property type="entry name" value="lumazine-synth"/>
    <property type="match status" value="1"/>
</dbReference>
<dbReference type="NCBIfam" id="NF000812">
    <property type="entry name" value="PRK00061.1-4"/>
    <property type="match status" value="1"/>
</dbReference>
<dbReference type="PANTHER" id="PTHR21058:SF0">
    <property type="entry name" value="6,7-DIMETHYL-8-RIBITYLLUMAZINE SYNTHASE"/>
    <property type="match status" value="1"/>
</dbReference>
<dbReference type="PANTHER" id="PTHR21058">
    <property type="entry name" value="6,7-DIMETHYL-8-RIBITYLLUMAZINE SYNTHASE DMRL SYNTHASE LUMAZINE SYNTHASE"/>
    <property type="match status" value="1"/>
</dbReference>
<dbReference type="Pfam" id="PF00885">
    <property type="entry name" value="DMRL_synthase"/>
    <property type="match status" value="1"/>
</dbReference>
<dbReference type="SUPFAM" id="SSF52121">
    <property type="entry name" value="Lumazine synthase"/>
    <property type="match status" value="1"/>
</dbReference>
<gene>
    <name evidence="1" type="primary">ribH</name>
    <name type="ordered locus">HD_1165</name>
</gene>
<proteinExistence type="inferred from homology"/>
<comment type="function">
    <text evidence="1">Catalyzes the formation of 6,7-dimethyl-8-ribityllumazine by condensation of 5-amino-6-(D-ribitylamino)uracil with 3,4-dihydroxy-2-butanone 4-phosphate. This is the penultimate step in the biosynthesis of riboflavin.</text>
</comment>
<comment type="catalytic activity">
    <reaction evidence="1">
        <text>(2S)-2-hydroxy-3-oxobutyl phosphate + 5-amino-6-(D-ribitylamino)uracil = 6,7-dimethyl-8-(1-D-ribityl)lumazine + phosphate + 2 H2O + H(+)</text>
        <dbReference type="Rhea" id="RHEA:26152"/>
        <dbReference type="ChEBI" id="CHEBI:15377"/>
        <dbReference type="ChEBI" id="CHEBI:15378"/>
        <dbReference type="ChEBI" id="CHEBI:15934"/>
        <dbReference type="ChEBI" id="CHEBI:43474"/>
        <dbReference type="ChEBI" id="CHEBI:58201"/>
        <dbReference type="ChEBI" id="CHEBI:58830"/>
        <dbReference type="EC" id="2.5.1.78"/>
    </reaction>
</comment>
<comment type="pathway">
    <text evidence="1">Cofactor biosynthesis; riboflavin biosynthesis; riboflavin from 2-hydroxy-3-oxobutyl phosphate and 5-amino-6-(D-ribitylamino)uracil: step 1/2.</text>
</comment>
<comment type="subunit">
    <text evidence="1">Forms an icosahedral capsid composed of 60 subunits, arranged as a dodecamer of pentamers.</text>
</comment>
<comment type="similarity">
    <text evidence="1">Belongs to the DMRL synthase family.</text>
</comment>
<keyword id="KW-1185">Reference proteome</keyword>
<keyword id="KW-0686">Riboflavin biosynthesis</keyword>
<keyword id="KW-0808">Transferase</keyword>
<protein>
    <recommendedName>
        <fullName evidence="1">6,7-dimethyl-8-ribityllumazine synthase</fullName>
        <shortName evidence="1">DMRL synthase</shortName>
        <shortName evidence="1">LS</shortName>
        <shortName evidence="1">Lumazine synthase</shortName>
        <ecNumber evidence="1">2.5.1.78</ecNumber>
    </recommendedName>
</protein>
<accession>Q7VM44</accession>
<evidence type="ECO:0000255" key="1">
    <source>
        <dbReference type="HAMAP-Rule" id="MF_00178"/>
    </source>
</evidence>
<name>RISB_HAEDU</name>
<reference key="1">
    <citation type="submission" date="2003-06" db="EMBL/GenBank/DDBJ databases">
        <title>The complete genome sequence of Haemophilus ducreyi.</title>
        <authorList>
            <person name="Munson R.S. Jr."/>
            <person name="Ray W.C."/>
            <person name="Mahairas G."/>
            <person name="Sabo P."/>
            <person name="Mungur R."/>
            <person name="Johnson L."/>
            <person name="Nguyen D."/>
            <person name="Wang J."/>
            <person name="Forst C."/>
            <person name="Hood L."/>
        </authorList>
    </citation>
    <scope>NUCLEOTIDE SEQUENCE [LARGE SCALE GENOMIC DNA]</scope>
    <source>
        <strain>35000HP / ATCC 700724</strain>
    </source>
</reference>
<organism>
    <name type="scientific">Haemophilus ducreyi (strain 35000HP / ATCC 700724)</name>
    <dbReference type="NCBI Taxonomy" id="233412"/>
    <lineage>
        <taxon>Bacteria</taxon>
        <taxon>Pseudomonadati</taxon>
        <taxon>Pseudomonadota</taxon>
        <taxon>Gammaproteobacteria</taxon>
        <taxon>Pasteurellales</taxon>
        <taxon>Pasteurellaceae</taxon>
        <taxon>Haemophilus</taxon>
    </lineage>
</organism>
<sequence>MAKITGNLVATGLKFSIVTARFNDFINDKLLSGAVDTLVRHGAVESDIDTVWVPGAFEIPLVAKKMAESGKYDAVICLGTVIRGSTTHYDYVCNEVAKGIGAVALQTGVPIMFGVLTTESIEQAIERAGTKAGNKGAECALGAIEMVNVLKAL</sequence>